<feature type="chain" id="PRO_0000205997" description="Ethanolamine ammonia-lyase small subunit">
    <location>
        <begin position="1"/>
        <end position="273"/>
    </location>
</feature>
<feature type="binding site" evidence="1">
    <location>
        <position position="164"/>
    </location>
    <ligand>
        <name>adenosylcob(III)alamin</name>
        <dbReference type="ChEBI" id="CHEBI:18408"/>
    </ligand>
</feature>
<feature type="binding site" evidence="1">
    <location>
        <position position="185"/>
    </location>
    <ligand>
        <name>adenosylcob(III)alamin</name>
        <dbReference type="ChEBI" id="CHEBI:18408"/>
    </ligand>
</feature>
<feature type="binding site" evidence="1">
    <location>
        <position position="214"/>
    </location>
    <ligand>
        <name>adenosylcob(III)alamin</name>
        <dbReference type="ChEBI" id="CHEBI:18408"/>
    </ligand>
</feature>
<proteinExistence type="inferred from homology"/>
<organism>
    <name type="scientific">Pseudomonas aeruginosa (strain ATCC 15692 / DSM 22644 / CIP 104116 / JCM 14847 / LMG 12228 / 1C / PRS 101 / PAO1)</name>
    <dbReference type="NCBI Taxonomy" id="208964"/>
    <lineage>
        <taxon>Bacteria</taxon>
        <taxon>Pseudomonadati</taxon>
        <taxon>Pseudomonadota</taxon>
        <taxon>Gammaproteobacteria</taxon>
        <taxon>Pseudomonadales</taxon>
        <taxon>Pseudomonadaceae</taxon>
        <taxon>Pseudomonas</taxon>
    </lineage>
</organism>
<sequence>MNDKHLPDASAENPWLPLRQLTPARIALGRTGTSLPTRPQLDFQYAHAQARDAVHLPFDHAAISDGLRQRGRDSLLLHSAAADRHVYLQRPDLGRRLDEASVQRLREHAAGYDGQIDLAIVVADGLSALAVQRHTLPFLERLEEQALAEGWSLSPVVLVEQGRVAVADEIGELLRAKMSVILIGERPGLSSPDSLGLYFTWAPRVGLTDAYRNCISNVRLEGLSYGMAAHRLLYLMREACRRQLSGVNLKDEAEVQALDGEAPRTGNFLLARD</sequence>
<reference key="1">
    <citation type="journal article" date="2000" name="Nature">
        <title>Complete genome sequence of Pseudomonas aeruginosa PAO1, an opportunistic pathogen.</title>
        <authorList>
            <person name="Stover C.K."/>
            <person name="Pham X.-Q.T."/>
            <person name="Erwin A.L."/>
            <person name="Mizoguchi S.D."/>
            <person name="Warrener P."/>
            <person name="Hickey M.J."/>
            <person name="Brinkman F.S.L."/>
            <person name="Hufnagle W.O."/>
            <person name="Kowalik D.J."/>
            <person name="Lagrou M."/>
            <person name="Garber R.L."/>
            <person name="Goltry L."/>
            <person name="Tolentino E."/>
            <person name="Westbrock-Wadman S."/>
            <person name="Yuan Y."/>
            <person name="Brody L.L."/>
            <person name="Coulter S.N."/>
            <person name="Folger K.R."/>
            <person name="Kas A."/>
            <person name="Larbig K."/>
            <person name="Lim R.M."/>
            <person name="Smith K.A."/>
            <person name="Spencer D.H."/>
            <person name="Wong G.K.-S."/>
            <person name="Wu Z."/>
            <person name="Paulsen I.T."/>
            <person name="Reizer J."/>
            <person name="Saier M.H. Jr."/>
            <person name="Hancock R.E.W."/>
            <person name="Lory S."/>
            <person name="Olson M.V."/>
        </authorList>
    </citation>
    <scope>NUCLEOTIDE SEQUENCE [LARGE SCALE GENOMIC DNA]</scope>
    <source>
        <strain>ATCC 15692 / DSM 22644 / CIP 104116 / JCM 14847 / LMG 12228 / 1C / PRS 101 / PAO1</strain>
    </source>
</reference>
<evidence type="ECO:0000255" key="1">
    <source>
        <dbReference type="HAMAP-Rule" id="MF_00601"/>
    </source>
</evidence>
<keyword id="KW-1283">Bacterial microcompartment</keyword>
<keyword id="KW-0846">Cobalamin</keyword>
<keyword id="KW-0170">Cobalt</keyword>
<keyword id="KW-0456">Lyase</keyword>
<keyword id="KW-1185">Reference proteome</keyword>
<dbReference type="EC" id="4.3.1.7" evidence="1"/>
<dbReference type="EMBL" id="AE004091">
    <property type="protein sequence ID" value="AAG07412.1"/>
    <property type="molecule type" value="Genomic_DNA"/>
</dbReference>
<dbReference type="PIR" id="A83143">
    <property type="entry name" value="A83143"/>
</dbReference>
<dbReference type="RefSeq" id="NP_252714.1">
    <property type="nucleotide sequence ID" value="NC_002516.2"/>
</dbReference>
<dbReference type="RefSeq" id="WP_003114907.1">
    <property type="nucleotide sequence ID" value="NZ_QZGE01000013.1"/>
</dbReference>
<dbReference type="SMR" id="Q9HX02"/>
<dbReference type="FunCoup" id="Q9HX02">
    <property type="interactions" value="41"/>
</dbReference>
<dbReference type="STRING" id="208964.PA4025"/>
<dbReference type="PaxDb" id="208964-PA4025"/>
<dbReference type="DNASU" id="879003"/>
<dbReference type="GeneID" id="879003"/>
<dbReference type="KEGG" id="pae:PA4025"/>
<dbReference type="PATRIC" id="fig|208964.12.peg.4217"/>
<dbReference type="PseudoCAP" id="PA4025"/>
<dbReference type="HOGENOM" id="CLU_068224_1_0_6"/>
<dbReference type="InParanoid" id="Q9HX02"/>
<dbReference type="OrthoDB" id="114248at2"/>
<dbReference type="PhylomeDB" id="Q9HX02"/>
<dbReference type="BioCyc" id="PAER208964:G1FZ6-4098-MONOMER"/>
<dbReference type="UniPathway" id="UPA00560"/>
<dbReference type="Proteomes" id="UP000002438">
    <property type="component" value="Chromosome"/>
</dbReference>
<dbReference type="GO" id="GO:0009350">
    <property type="term" value="C:ethanolamine ammonia-lyase complex"/>
    <property type="evidence" value="ECO:0000318"/>
    <property type="project" value="GO_Central"/>
</dbReference>
<dbReference type="GO" id="GO:0031471">
    <property type="term" value="C:ethanolamine degradation polyhedral organelle"/>
    <property type="evidence" value="ECO:0007669"/>
    <property type="project" value="UniProtKB-UniRule"/>
</dbReference>
<dbReference type="GO" id="GO:0031419">
    <property type="term" value="F:cobalamin binding"/>
    <property type="evidence" value="ECO:0007669"/>
    <property type="project" value="UniProtKB-UniRule"/>
</dbReference>
<dbReference type="GO" id="GO:0008851">
    <property type="term" value="F:ethanolamine ammonia-lyase activity"/>
    <property type="evidence" value="ECO:0007669"/>
    <property type="project" value="UniProtKB-UniRule"/>
</dbReference>
<dbReference type="GO" id="GO:0006520">
    <property type="term" value="P:amino acid metabolic process"/>
    <property type="evidence" value="ECO:0007669"/>
    <property type="project" value="InterPro"/>
</dbReference>
<dbReference type="GO" id="GO:0046336">
    <property type="term" value="P:ethanolamine catabolic process"/>
    <property type="evidence" value="ECO:0007669"/>
    <property type="project" value="UniProtKB-UniRule"/>
</dbReference>
<dbReference type="FunFam" id="1.10.30.40:FF:000001">
    <property type="entry name" value="Ethanolamine ammonia-lyase light chain"/>
    <property type="match status" value="1"/>
</dbReference>
<dbReference type="FunFam" id="3.40.50.11240:FF:000001">
    <property type="entry name" value="Ethanolamine ammonia-lyase light chain"/>
    <property type="match status" value="1"/>
</dbReference>
<dbReference type="Gene3D" id="3.40.50.11240">
    <property type="entry name" value="Ethanolamine ammonia-lyase light chain (EutC)"/>
    <property type="match status" value="1"/>
</dbReference>
<dbReference type="Gene3D" id="1.10.30.40">
    <property type="entry name" value="Ethanolamine ammonia-lyase light chain (EutC), N-terminal domain"/>
    <property type="match status" value="1"/>
</dbReference>
<dbReference type="HAMAP" id="MF_00601">
    <property type="entry name" value="EutC"/>
    <property type="match status" value="1"/>
</dbReference>
<dbReference type="InterPro" id="IPR009246">
    <property type="entry name" value="EutC"/>
</dbReference>
<dbReference type="InterPro" id="IPR042251">
    <property type="entry name" value="EutC_C"/>
</dbReference>
<dbReference type="InterPro" id="IPR042255">
    <property type="entry name" value="EutC_N"/>
</dbReference>
<dbReference type="NCBIfam" id="NF003971">
    <property type="entry name" value="PRK05465.1"/>
    <property type="match status" value="1"/>
</dbReference>
<dbReference type="PANTHER" id="PTHR39330">
    <property type="entry name" value="ETHANOLAMINE AMMONIA-LYASE LIGHT CHAIN"/>
    <property type="match status" value="1"/>
</dbReference>
<dbReference type="PANTHER" id="PTHR39330:SF1">
    <property type="entry name" value="ETHANOLAMINE AMMONIA-LYASE SMALL SUBUNIT"/>
    <property type="match status" value="1"/>
</dbReference>
<dbReference type="Pfam" id="PF05985">
    <property type="entry name" value="EutC"/>
    <property type="match status" value="1"/>
</dbReference>
<dbReference type="PIRSF" id="PIRSF018982">
    <property type="entry name" value="EutC"/>
    <property type="match status" value="1"/>
</dbReference>
<accession>Q9HX02</accession>
<gene>
    <name evidence="1" type="primary">eutC</name>
    <name type="ordered locus">PA4025</name>
</gene>
<comment type="function">
    <text evidence="1">Catalyzes the deamination of various vicinal amino-alcohols to oxo compounds. Allows this organism to utilize ethanolamine as the sole source of nitrogen and carbon in the presence of external vitamin B12.</text>
</comment>
<comment type="catalytic activity">
    <reaction evidence="1">
        <text>ethanolamine = acetaldehyde + NH4(+)</text>
        <dbReference type="Rhea" id="RHEA:15313"/>
        <dbReference type="ChEBI" id="CHEBI:15343"/>
        <dbReference type="ChEBI" id="CHEBI:28938"/>
        <dbReference type="ChEBI" id="CHEBI:57603"/>
        <dbReference type="EC" id="4.3.1.7"/>
    </reaction>
</comment>
<comment type="cofactor">
    <cofactor evidence="1">
        <name>adenosylcob(III)alamin</name>
        <dbReference type="ChEBI" id="CHEBI:18408"/>
    </cofactor>
    <text evidence="1">Binds between the large and small subunits.</text>
</comment>
<comment type="pathway">
    <text evidence="1">Amine and polyamine degradation; ethanolamine degradation.</text>
</comment>
<comment type="subunit">
    <text evidence="1">The basic unit is a heterodimer which dimerizes to form tetramers. The heterotetramers trimerize; 6 large subunits form a core ring with 6 small subunits projecting outwards.</text>
</comment>
<comment type="subcellular location">
    <subcellularLocation>
        <location evidence="1">Bacterial microcompartment</location>
    </subcellularLocation>
</comment>
<comment type="similarity">
    <text evidence="1">Belongs to the EutC family.</text>
</comment>
<name>EUTC_PSEAE</name>
<protein>
    <recommendedName>
        <fullName evidence="1">Ethanolamine ammonia-lyase small subunit</fullName>
        <shortName evidence="1">EAL small subunit</shortName>
        <ecNumber evidence="1">4.3.1.7</ecNumber>
    </recommendedName>
</protein>